<reference key="1">
    <citation type="submission" date="2008-04" db="EMBL/GenBank/DDBJ databases">
        <title>Complete sequence of chromosome of Exiguobacterium sibiricum 255-15.</title>
        <authorList>
            <consortium name="US DOE Joint Genome Institute"/>
            <person name="Copeland A."/>
            <person name="Lucas S."/>
            <person name="Lapidus A."/>
            <person name="Glavina del Rio T."/>
            <person name="Dalin E."/>
            <person name="Tice H."/>
            <person name="Bruce D."/>
            <person name="Goodwin L."/>
            <person name="Pitluck S."/>
            <person name="Kiss H."/>
            <person name="Chertkov O."/>
            <person name="Monk C."/>
            <person name="Brettin T."/>
            <person name="Detter J.C."/>
            <person name="Han C."/>
            <person name="Kuske C.R."/>
            <person name="Schmutz J."/>
            <person name="Larimer F."/>
            <person name="Land M."/>
            <person name="Hauser L."/>
            <person name="Kyrpides N."/>
            <person name="Mikhailova N."/>
            <person name="Vishnivetskaya T."/>
            <person name="Rodrigues D.F."/>
            <person name="Gilichinsky D."/>
            <person name="Tiedje J."/>
            <person name="Richardson P."/>
        </authorList>
    </citation>
    <scope>NUCLEOTIDE SEQUENCE [LARGE SCALE GENOMIC DNA]</scope>
    <source>
        <strain>DSM 17290 / CCUG 55495 / CIP 109462 / JCM 13490 / 255-15</strain>
    </source>
</reference>
<keyword id="KW-0963">Cytoplasm</keyword>
<keyword id="KW-0227">DNA damage</keyword>
<keyword id="KW-0233">DNA recombination</keyword>
<keyword id="KW-0234">DNA repair</keyword>
<keyword id="KW-0238">DNA-binding</keyword>
<keyword id="KW-1185">Reference proteome</keyword>
<comment type="function">
    <text evidence="1">The RuvA-RuvB-RuvC complex processes Holliday junction (HJ) DNA during genetic recombination and DNA repair, while the RuvA-RuvB complex plays an important role in the rescue of blocked DNA replication forks via replication fork reversal (RFR). RuvA specifically binds to HJ cruciform DNA, conferring on it an open structure. The RuvB hexamer acts as an ATP-dependent pump, pulling dsDNA into and through the RuvAB complex. HJ branch migration allows RuvC to scan DNA until it finds its consensus sequence, where it cleaves and resolves the cruciform DNA.</text>
</comment>
<comment type="subunit">
    <text evidence="1">Homotetramer. Forms an RuvA(8)-RuvB(12)-Holliday junction (HJ) complex. HJ DNA is sandwiched between 2 RuvA tetramers; dsDNA enters through RuvA and exits via RuvB. An RuvB hexamer assembles on each DNA strand where it exits the tetramer. Each RuvB hexamer is contacted by two RuvA subunits (via domain III) on 2 adjacent RuvB subunits; this complex drives branch migration. In the full resolvosome a probable DNA-RuvA(4)-RuvB(12)-RuvC(2) complex forms which resolves the HJ.</text>
</comment>
<comment type="subcellular location">
    <subcellularLocation>
        <location evidence="1">Cytoplasm</location>
    </subcellularLocation>
</comment>
<comment type="domain">
    <text evidence="1">Has three domains with a flexible linker between the domains II and III and assumes an 'L' shape. Domain III is highly mobile and contacts RuvB.</text>
</comment>
<comment type="similarity">
    <text evidence="1">Belongs to the RuvA family.</text>
</comment>
<proteinExistence type="inferred from homology"/>
<sequence>MIEFVRGEVAYVCAEFVTIEVGGIGYKIVAPNPFFYRTGDEQVIVYTYHYVREDQEVLFGFRSRRERALFTKLLGVTGIGPKGSLAIVASGDVDALVEAIEQEKESYLIKFPGVGKKTAKQMTLDLKGKLAELAPDYIPSEGLFAQGNAELNEACEALTALGYSEREVEKVKKALQGEVLSTDQYVKRALQLLLNVR</sequence>
<evidence type="ECO:0000255" key="1">
    <source>
        <dbReference type="HAMAP-Rule" id="MF_00031"/>
    </source>
</evidence>
<name>RUVA_EXIS2</name>
<dbReference type="EMBL" id="CP001022">
    <property type="protein sequence ID" value="ACB61550.1"/>
    <property type="molecule type" value="Genomic_DNA"/>
</dbReference>
<dbReference type="RefSeq" id="WP_012370967.1">
    <property type="nucleotide sequence ID" value="NC_010556.1"/>
</dbReference>
<dbReference type="SMR" id="B1YJR2"/>
<dbReference type="STRING" id="262543.Exig_2098"/>
<dbReference type="KEGG" id="esi:Exig_2098"/>
<dbReference type="eggNOG" id="COG0632">
    <property type="taxonomic scope" value="Bacteria"/>
</dbReference>
<dbReference type="HOGENOM" id="CLU_087936_1_0_9"/>
<dbReference type="OrthoDB" id="5293449at2"/>
<dbReference type="Proteomes" id="UP000001681">
    <property type="component" value="Chromosome"/>
</dbReference>
<dbReference type="GO" id="GO:0005737">
    <property type="term" value="C:cytoplasm"/>
    <property type="evidence" value="ECO:0007669"/>
    <property type="project" value="UniProtKB-SubCell"/>
</dbReference>
<dbReference type="GO" id="GO:0009379">
    <property type="term" value="C:Holliday junction helicase complex"/>
    <property type="evidence" value="ECO:0007669"/>
    <property type="project" value="InterPro"/>
</dbReference>
<dbReference type="GO" id="GO:0048476">
    <property type="term" value="C:Holliday junction resolvase complex"/>
    <property type="evidence" value="ECO:0007669"/>
    <property type="project" value="UniProtKB-UniRule"/>
</dbReference>
<dbReference type="GO" id="GO:0005524">
    <property type="term" value="F:ATP binding"/>
    <property type="evidence" value="ECO:0007669"/>
    <property type="project" value="InterPro"/>
</dbReference>
<dbReference type="GO" id="GO:0000400">
    <property type="term" value="F:four-way junction DNA binding"/>
    <property type="evidence" value="ECO:0007669"/>
    <property type="project" value="UniProtKB-UniRule"/>
</dbReference>
<dbReference type="GO" id="GO:0009378">
    <property type="term" value="F:four-way junction helicase activity"/>
    <property type="evidence" value="ECO:0007669"/>
    <property type="project" value="InterPro"/>
</dbReference>
<dbReference type="GO" id="GO:0006310">
    <property type="term" value="P:DNA recombination"/>
    <property type="evidence" value="ECO:0007669"/>
    <property type="project" value="UniProtKB-UniRule"/>
</dbReference>
<dbReference type="GO" id="GO:0006281">
    <property type="term" value="P:DNA repair"/>
    <property type="evidence" value="ECO:0007669"/>
    <property type="project" value="UniProtKB-UniRule"/>
</dbReference>
<dbReference type="CDD" id="cd14332">
    <property type="entry name" value="UBA_RuvA_C"/>
    <property type="match status" value="1"/>
</dbReference>
<dbReference type="Gene3D" id="1.10.150.20">
    <property type="entry name" value="5' to 3' exonuclease, C-terminal subdomain"/>
    <property type="match status" value="1"/>
</dbReference>
<dbReference type="Gene3D" id="1.10.8.10">
    <property type="entry name" value="DNA helicase RuvA subunit, C-terminal domain"/>
    <property type="match status" value="1"/>
</dbReference>
<dbReference type="Gene3D" id="2.40.50.140">
    <property type="entry name" value="Nucleic acid-binding proteins"/>
    <property type="match status" value="1"/>
</dbReference>
<dbReference type="HAMAP" id="MF_00031">
    <property type="entry name" value="DNA_HJ_migration_RuvA"/>
    <property type="match status" value="1"/>
</dbReference>
<dbReference type="InterPro" id="IPR013849">
    <property type="entry name" value="DNA_helicase_Holl-junc_RuvA_I"/>
</dbReference>
<dbReference type="InterPro" id="IPR012340">
    <property type="entry name" value="NA-bd_OB-fold"/>
</dbReference>
<dbReference type="InterPro" id="IPR000085">
    <property type="entry name" value="RuvA"/>
</dbReference>
<dbReference type="InterPro" id="IPR010994">
    <property type="entry name" value="RuvA_2-like"/>
</dbReference>
<dbReference type="InterPro" id="IPR011114">
    <property type="entry name" value="RuvA_C"/>
</dbReference>
<dbReference type="InterPro" id="IPR036267">
    <property type="entry name" value="RuvA_C_sf"/>
</dbReference>
<dbReference type="NCBIfam" id="TIGR00084">
    <property type="entry name" value="ruvA"/>
    <property type="match status" value="1"/>
</dbReference>
<dbReference type="Pfam" id="PF14520">
    <property type="entry name" value="HHH_5"/>
    <property type="match status" value="1"/>
</dbReference>
<dbReference type="Pfam" id="PF07499">
    <property type="entry name" value="RuvA_C"/>
    <property type="match status" value="1"/>
</dbReference>
<dbReference type="Pfam" id="PF01330">
    <property type="entry name" value="RuvA_N"/>
    <property type="match status" value="1"/>
</dbReference>
<dbReference type="SUPFAM" id="SSF46929">
    <property type="entry name" value="DNA helicase RuvA subunit, C-terminal domain"/>
    <property type="match status" value="1"/>
</dbReference>
<dbReference type="SUPFAM" id="SSF50249">
    <property type="entry name" value="Nucleic acid-binding proteins"/>
    <property type="match status" value="1"/>
</dbReference>
<dbReference type="SUPFAM" id="SSF47781">
    <property type="entry name" value="RuvA domain 2-like"/>
    <property type="match status" value="1"/>
</dbReference>
<organism>
    <name type="scientific">Exiguobacterium sibiricum (strain DSM 17290 / CCUG 55495 / CIP 109462 / JCM 13490 / 255-15)</name>
    <dbReference type="NCBI Taxonomy" id="262543"/>
    <lineage>
        <taxon>Bacteria</taxon>
        <taxon>Bacillati</taxon>
        <taxon>Bacillota</taxon>
        <taxon>Bacilli</taxon>
        <taxon>Bacillales</taxon>
        <taxon>Bacillales Family XII. Incertae Sedis</taxon>
        <taxon>Exiguobacterium</taxon>
    </lineage>
</organism>
<feature type="chain" id="PRO_1000090317" description="Holliday junction branch migration complex subunit RuvA">
    <location>
        <begin position="1"/>
        <end position="197"/>
    </location>
</feature>
<feature type="region of interest" description="Domain I" evidence="1">
    <location>
        <begin position="1"/>
        <end position="62"/>
    </location>
</feature>
<feature type="region of interest" description="Domain II" evidence="1">
    <location>
        <begin position="63"/>
        <end position="141"/>
    </location>
</feature>
<feature type="region of interest" description="Flexible linker" evidence="1">
    <location>
        <begin position="141"/>
        <end position="145"/>
    </location>
</feature>
<feature type="region of interest" description="Domain III" evidence="1">
    <location>
        <begin position="146"/>
        <end position="197"/>
    </location>
</feature>
<accession>B1YJR2</accession>
<gene>
    <name evidence="1" type="primary">ruvA</name>
    <name type="ordered locus">Exig_2098</name>
</gene>
<protein>
    <recommendedName>
        <fullName evidence="1">Holliday junction branch migration complex subunit RuvA</fullName>
    </recommendedName>
</protein>